<organism>
    <name type="scientific">Escherichia coli (strain K12 / MC4100 / BW2952)</name>
    <dbReference type="NCBI Taxonomy" id="595496"/>
    <lineage>
        <taxon>Bacteria</taxon>
        <taxon>Pseudomonadati</taxon>
        <taxon>Pseudomonadota</taxon>
        <taxon>Gammaproteobacteria</taxon>
        <taxon>Enterobacterales</taxon>
        <taxon>Enterobacteriaceae</taxon>
        <taxon>Escherichia</taxon>
    </lineage>
</organism>
<gene>
    <name evidence="1" type="primary">rihC</name>
    <name type="ordered locus">BWG_0028</name>
</gene>
<keyword id="KW-0326">Glycosidase</keyword>
<keyword id="KW-0378">Hydrolase</keyword>
<reference key="1">
    <citation type="journal article" date="2009" name="J. Bacteriol.">
        <title>Genomic sequencing reveals regulatory mutations and recombinational events in the widely used MC4100 lineage of Escherichia coli K-12.</title>
        <authorList>
            <person name="Ferenci T."/>
            <person name="Zhou Z."/>
            <person name="Betteridge T."/>
            <person name="Ren Y."/>
            <person name="Liu Y."/>
            <person name="Feng L."/>
            <person name="Reeves P.R."/>
            <person name="Wang L."/>
        </authorList>
    </citation>
    <scope>NUCLEOTIDE SEQUENCE [LARGE SCALE GENOMIC DNA]</scope>
    <source>
        <strain>K12 / MC4100 / BW2952</strain>
    </source>
</reference>
<name>RIHC_ECOBW</name>
<comment type="function">
    <text evidence="1">Hydrolyzes both purine and pyrimidine ribonucleosides with a broad-substrate specificity.</text>
</comment>
<comment type="similarity">
    <text evidence="1">Belongs to the IUNH family. RihC subfamily.</text>
</comment>
<feature type="chain" id="PRO_1000215277" description="Non-specific ribonucleoside hydrolase RihC">
    <location>
        <begin position="1"/>
        <end position="304"/>
    </location>
</feature>
<feature type="active site" evidence="1">
    <location>
        <position position="233"/>
    </location>
</feature>
<protein>
    <recommendedName>
        <fullName evidence="1">Non-specific ribonucleoside hydrolase RihC</fullName>
        <ecNumber evidence="1">3.2.-.-</ecNumber>
    </recommendedName>
    <alternativeName>
        <fullName evidence="1">Purine/pyrimidine ribonucleoside hydrolase</fullName>
    </alternativeName>
</protein>
<proteinExistence type="inferred from homology"/>
<dbReference type="EC" id="3.2.-.-" evidence="1"/>
<dbReference type="EMBL" id="CP001396">
    <property type="protein sequence ID" value="ACR65476.1"/>
    <property type="molecule type" value="Genomic_DNA"/>
</dbReference>
<dbReference type="RefSeq" id="WP_001239142.1">
    <property type="nucleotide sequence ID" value="NC_012759.1"/>
</dbReference>
<dbReference type="SMR" id="C4ZPV6"/>
<dbReference type="GeneID" id="75169929"/>
<dbReference type="KEGG" id="ebw:BWG_0028"/>
<dbReference type="HOGENOM" id="CLU_036838_2_2_6"/>
<dbReference type="GO" id="GO:0005829">
    <property type="term" value="C:cytosol"/>
    <property type="evidence" value="ECO:0007669"/>
    <property type="project" value="TreeGrafter"/>
</dbReference>
<dbReference type="GO" id="GO:0008477">
    <property type="term" value="F:purine nucleosidase activity"/>
    <property type="evidence" value="ECO:0007669"/>
    <property type="project" value="TreeGrafter"/>
</dbReference>
<dbReference type="GO" id="GO:0045437">
    <property type="term" value="F:uridine nucleosidase activity"/>
    <property type="evidence" value="ECO:0007669"/>
    <property type="project" value="UniProtKB-ARBA"/>
</dbReference>
<dbReference type="GO" id="GO:0006144">
    <property type="term" value="P:purine nucleobase metabolic process"/>
    <property type="evidence" value="ECO:0007669"/>
    <property type="project" value="UniProtKB-UniRule"/>
</dbReference>
<dbReference type="GO" id="GO:0006152">
    <property type="term" value="P:purine nucleoside catabolic process"/>
    <property type="evidence" value="ECO:0007669"/>
    <property type="project" value="TreeGrafter"/>
</dbReference>
<dbReference type="GO" id="GO:0006206">
    <property type="term" value="P:pyrimidine nucleobase metabolic process"/>
    <property type="evidence" value="ECO:0007669"/>
    <property type="project" value="UniProtKB-UniRule"/>
</dbReference>
<dbReference type="CDD" id="cd02651">
    <property type="entry name" value="nuc_hydro_IU_UC_XIUA"/>
    <property type="match status" value="1"/>
</dbReference>
<dbReference type="FunFam" id="3.90.245.10:FF:000002">
    <property type="entry name" value="Non-specific ribonucleoside hydrolase RihC"/>
    <property type="match status" value="1"/>
</dbReference>
<dbReference type="Gene3D" id="3.90.245.10">
    <property type="entry name" value="Ribonucleoside hydrolase-like"/>
    <property type="match status" value="1"/>
</dbReference>
<dbReference type="HAMAP" id="MF_01432">
    <property type="entry name" value="Nucleosid_hydro_RihC"/>
    <property type="match status" value="1"/>
</dbReference>
<dbReference type="InterPro" id="IPR015910">
    <property type="entry name" value="I/U_nuclsd_hydro_CS"/>
</dbReference>
<dbReference type="InterPro" id="IPR001910">
    <property type="entry name" value="Inosine/uridine_hydrolase_dom"/>
</dbReference>
<dbReference type="InterPro" id="IPR023186">
    <property type="entry name" value="IUNH"/>
</dbReference>
<dbReference type="InterPro" id="IPR022976">
    <property type="entry name" value="Nucleosid_hydro_RihC_nonspecif"/>
</dbReference>
<dbReference type="InterPro" id="IPR036452">
    <property type="entry name" value="Ribo_hydro-like"/>
</dbReference>
<dbReference type="NCBIfam" id="NF008036">
    <property type="entry name" value="PRK10768.1"/>
    <property type="match status" value="1"/>
</dbReference>
<dbReference type="PANTHER" id="PTHR12304">
    <property type="entry name" value="INOSINE-URIDINE PREFERRING NUCLEOSIDE HYDROLASE"/>
    <property type="match status" value="1"/>
</dbReference>
<dbReference type="PANTHER" id="PTHR12304:SF15">
    <property type="entry name" value="NON-SPECIFIC RIBONUCLEOSIDE HYDROLASE RIHC"/>
    <property type="match status" value="1"/>
</dbReference>
<dbReference type="Pfam" id="PF01156">
    <property type="entry name" value="IU_nuc_hydro"/>
    <property type="match status" value="1"/>
</dbReference>
<dbReference type="SUPFAM" id="SSF53590">
    <property type="entry name" value="Nucleoside hydrolase"/>
    <property type="match status" value="1"/>
</dbReference>
<dbReference type="PROSITE" id="PS01247">
    <property type="entry name" value="IUNH"/>
    <property type="match status" value="1"/>
</dbReference>
<evidence type="ECO:0000255" key="1">
    <source>
        <dbReference type="HAMAP-Rule" id="MF_01432"/>
    </source>
</evidence>
<sequence>MRLPIFLDTDPGIDDAVAIAAAIFAPELDLQLMTTVAGNVSVEKTTRNALQLLHFWNAEIPLAQGAAVPLVRAPRDAASVHGESGMAGYDFVEHNRKPLGIPAFLAIRDALMRAPEPVTLVAIGPLTNIALLLSQCPECKPYIRRLVIMGGSAGRGNCTPNAEFNIAADPEAAACVFRSGIEIVMCGLDVTNQAILTPDYLSTLPQLNRTGKMLHALFSHYRSGSMQSGLRMHDLCAIAWLVRPDLFTLKPCFVAVETQGEFTSGTTVVDIDGCLGKPANVQVALDLDVKGFQQWVAEVLALAS</sequence>
<accession>C4ZPV6</accession>